<feature type="signal peptide" evidence="2">
    <location>
        <begin position="1" status="less than"/>
        <end position="17"/>
    </location>
</feature>
<feature type="propeptide" id="PRO_0000392134" evidence="1">
    <location>
        <begin position="18"/>
        <end position="40"/>
    </location>
</feature>
<feature type="peptide" id="PRO_0000392135" description="Conotoxin AbVIM">
    <location>
        <begin position="43"/>
        <end position="67"/>
    </location>
</feature>
<feature type="disulfide bond" evidence="1">
    <location>
        <begin position="43"/>
        <end position="57"/>
    </location>
</feature>
<feature type="disulfide bond" evidence="1">
    <location>
        <begin position="50"/>
        <end position="61"/>
    </location>
</feature>
<feature type="disulfide bond" evidence="1">
    <location>
        <begin position="56"/>
        <end position="66"/>
    </location>
</feature>
<feature type="sequence conflict" description="In Ref. 1 and 2; AAD48324." evidence="3" ref="1 2">
    <original>LII</original>
    <variation>IIF</variation>
    <location>
        <begin position="2"/>
        <end position="4"/>
    </location>
</feature>
<feature type="non-terminal residue">
    <location>
        <position position="1"/>
    </location>
</feature>
<protein>
    <recommendedName>
        <fullName>Conotoxin AbVIM</fullName>
    </recommendedName>
</protein>
<name>O16M_CONAB</name>
<proteinExistence type="evidence at transcript level"/>
<accession>Q9UA72</accession>
<accession>Q9UA73</accession>
<evidence type="ECO:0000250" key="1"/>
<evidence type="ECO:0000255" key="2"/>
<evidence type="ECO:0000305" key="3"/>
<reference key="1">
    <citation type="journal article" date="1999" name="Proc. Natl. Acad. Sci. U.S.A.">
        <title>Molecular genetics of ecological diversification: duplication and rapid evolution of toxin genes of the venomous gastropod Conus.</title>
        <authorList>
            <person name="Duda T.F. Jr."/>
            <person name="Palumbi S.R."/>
        </authorList>
    </citation>
    <scope>NUCLEOTIDE SEQUENCE [MRNA]</scope>
    <source>
        <tissue>Venom duct</tissue>
    </source>
</reference>
<reference key="2">
    <citation type="journal article" date="2004" name="Proc. R. Soc. B">
        <title>Gene expression and feeding ecology: evolution of piscivory in the venomous gastropod genus Conus.</title>
        <authorList>
            <person name="Duda T.F. Jr."/>
            <person name="Palumbi S.R."/>
        </authorList>
    </citation>
    <scope>NUCLEOTIDE SEQUENCE [MRNA]</scope>
    <source>
        <tissue>Venom duct</tissue>
    </source>
</reference>
<comment type="subcellular location">
    <subcellularLocation>
        <location evidence="1">Secreted</location>
    </subcellularLocation>
</comment>
<comment type="tissue specificity">
    <text>Expressed by the venom duct.</text>
</comment>
<comment type="domain">
    <text evidence="1">The presence of a 'disulfide through disulfide knot' structurally defines this protein as a knottin.</text>
</comment>
<comment type="domain">
    <text>The cysteine framework is VI/VII (C-C-CC-C-C).</text>
</comment>
<comment type="similarity">
    <text evidence="3">Belongs to the conotoxin O1 superfamily.</text>
</comment>
<sequence>VLIIAVLFLTACQLIATASYARSERKHPDLRLSSRNSKLSKRCLGSGELCVRDTSCCSMSCTNNICF</sequence>
<organism>
    <name type="scientific">Conus abbreviatus</name>
    <name type="common">Abbreviated cone</name>
    <name type="synonym">Miliariconus abbreviatus</name>
    <dbReference type="NCBI Taxonomy" id="100123"/>
    <lineage>
        <taxon>Eukaryota</taxon>
        <taxon>Metazoa</taxon>
        <taxon>Spiralia</taxon>
        <taxon>Lophotrochozoa</taxon>
        <taxon>Mollusca</taxon>
        <taxon>Gastropoda</taxon>
        <taxon>Caenogastropoda</taxon>
        <taxon>Neogastropoda</taxon>
        <taxon>Conoidea</taxon>
        <taxon>Conidae</taxon>
        <taxon>Conus</taxon>
        <taxon>Virroconus</taxon>
    </lineage>
</organism>
<keyword id="KW-0165">Cleavage on pair of basic residues</keyword>
<keyword id="KW-1015">Disulfide bond</keyword>
<keyword id="KW-0960">Knottin</keyword>
<keyword id="KW-0964">Secreted</keyword>
<keyword id="KW-0732">Signal</keyword>
<keyword id="KW-0800">Toxin</keyword>
<dbReference type="EMBL" id="AF090071">
    <property type="protein sequence ID" value="AAD48324.1"/>
    <property type="molecule type" value="mRNA"/>
</dbReference>
<dbReference type="EMBL" id="AF090072">
    <property type="protein sequence ID" value="AAD48325.1"/>
    <property type="molecule type" value="mRNA"/>
</dbReference>
<dbReference type="SMR" id="Q9UA72"/>
<dbReference type="ConoServer" id="1046">
    <property type="toxin name" value="ABVIM precursor"/>
</dbReference>
<dbReference type="ConoServer" id="1047">
    <property type="toxin name" value="ABVIM precursor"/>
</dbReference>
<dbReference type="GO" id="GO:0005576">
    <property type="term" value="C:extracellular region"/>
    <property type="evidence" value="ECO:0007669"/>
    <property type="project" value="UniProtKB-SubCell"/>
</dbReference>
<dbReference type="GO" id="GO:0008200">
    <property type="term" value="F:ion channel inhibitor activity"/>
    <property type="evidence" value="ECO:0007669"/>
    <property type="project" value="InterPro"/>
</dbReference>
<dbReference type="GO" id="GO:0090729">
    <property type="term" value="F:toxin activity"/>
    <property type="evidence" value="ECO:0007669"/>
    <property type="project" value="UniProtKB-KW"/>
</dbReference>
<dbReference type="InterPro" id="IPR004214">
    <property type="entry name" value="Conotoxin"/>
</dbReference>
<dbReference type="Pfam" id="PF02950">
    <property type="entry name" value="Conotoxin"/>
    <property type="match status" value="1"/>
</dbReference>